<accession>B9DN91</accession>
<protein>
    <recommendedName>
        <fullName evidence="1">Small ribosomal subunit protein uS4</fullName>
    </recommendedName>
    <alternativeName>
        <fullName evidence="2">30S ribosomal protein S4</fullName>
    </alternativeName>
</protein>
<keyword id="KW-1185">Reference proteome</keyword>
<keyword id="KW-0687">Ribonucleoprotein</keyword>
<keyword id="KW-0689">Ribosomal protein</keyword>
<keyword id="KW-0694">RNA-binding</keyword>
<keyword id="KW-0699">rRNA-binding</keyword>
<gene>
    <name evidence="1" type="primary">rpsD</name>
    <name type="ordered locus">Sca_1326</name>
</gene>
<feature type="chain" id="PRO_1000165424" description="Small ribosomal subunit protein uS4">
    <location>
        <begin position="1"/>
        <end position="201"/>
    </location>
</feature>
<feature type="domain" description="S4 RNA-binding" evidence="1">
    <location>
        <begin position="92"/>
        <end position="155"/>
    </location>
</feature>
<proteinExistence type="inferred from homology"/>
<organism>
    <name type="scientific">Staphylococcus carnosus (strain TM300)</name>
    <dbReference type="NCBI Taxonomy" id="396513"/>
    <lineage>
        <taxon>Bacteria</taxon>
        <taxon>Bacillati</taxon>
        <taxon>Bacillota</taxon>
        <taxon>Bacilli</taxon>
        <taxon>Bacillales</taxon>
        <taxon>Staphylococcaceae</taxon>
        <taxon>Staphylococcus</taxon>
    </lineage>
</organism>
<dbReference type="EMBL" id="AM295250">
    <property type="protein sequence ID" value="CAL28231.1"/>
    <property type="molecule type" value="Genomic_DNA"/>
</dbReference>
<dbReference type="RefSeq" id="WP_015900571.1">
    <property type="nucleotide sequence ID" value="NC_012121.1"/>
</dbReference>
<dbReference type="SMR" id="B9DN91"/>
<dbReference type="GeneID" id="93793746"/>
<dbReference type="KEGG" id="sca:SCA_1326"/>
<dbReference type="eggNOG" id="COG0522">
    <property type="taxonomic scope" value="Bacteria"/>
</dbReference>
<dbReference type="HOGENOM" id="CLU_092403_0_1_9"/>
<dbReference type="OrthoDB" id="9803672at2"/>
<dbReference type="BioCyc" id="SCAR396513:SCA_RS06595-MONOMER"/>
<dbReference type="Proteomes" id="UP000000444">
    <property type="component" value="Chromosome"/>
</dbReference>
<dbReference type="GO" id="GO:0015935">
    <property type="term" value="C:small ribosomal subunit"/>
    <property type="evidence" value="ECO:0007669"/>
    <property type="project" value="InterPro"/>
</dbReference>
<dbReference type="GO" id="GO:0019843">
    <property type="term" value="F:rRNA binding"/>
    <property type="evidence" value="ECO:0007669"/>
    <property type="project" value="UniProtKB-UniRule"/>
</dbReference>
<dbReference type="GO" id="GO:0003735">
    <property type="term" value="F:structural constituent of ribosome"/>
    <property type="evidence" value="ECO:0007669"/>
    <property type="project" value="InterPro"/>
</dbReference>
<dbReference type="GO" id="GO:0042274">
    <property type="term" value="P:ribosomal small subunit biogenesis"/>
    <property type="evidence" value="ECO:0007669"/>
    <property type="project" value="TreeGrafter"/>
</dbReference>
<dbReference type="GO" id="GO:0006412">
    <property type="term" value="P:translation"/>
    <property type="evidence" value="ECO:0007669"/>
    <property type="project" value="UniProtKB-UniRule"/>
</dbReference>
<dbReference type="CDD" id="cd00165">
    <property type="entry name" value="S4"/>
    <property type="match status" value="1"/>
</dbReference>
<dbReference type="FunFam" id="1.10.1050.10:FF:000001">
    <property type="entry name" value="30S ribosomal protein S4"/>
    <property type="match status" value="1"/>
</dbReference>
<dbReference type="FunFam" id="3.10.290.10:FF:000001">
    <property type="entry name" value="30S ribosomal protein S4"/>
    <property type="match status" value="1"/>
</dbReference>
<dbReference type="Gene3D" id="1.10.1050.10">
    <property type="entry name" value="Ribosomal Protein S4 Delta 41, Chain A, domain 1"/>
    <property type="match status" value="1"/>
</dbReference>
<dbReference type="Gene3D" id="3.10.290.10">
    <property type="entry name" value="RNA-binding S4 domain"/>
    <property type="match status" value="1"/>
</dbReference>
<dbReference type="HAMAP" id="MF_01306_B">
    <property type="entry name" value="Ribosomal_uS4_B"/>
    <property type="match status" value="1"/>
</dbReference>
<dbReference type="InterPro" id="IPR022801">
    <property type="entry name" value="Ribosomal_uS4"/>
</dbReference>
<dbReference type="InterPro" id="IPR005709">
    <property type="entry name" value="Ribosomal_uS4_bac-type"/>
</dbReference>
<dbReference type="InterPro" id="IPR001912">
    <property type="entry name" value="Ribosomal_uS4_N"/>
</dbReference>
<dbReference type="InterPro" id="IPR002942">
    <property type="entry name" value="S4_RNA-bd"/>
</dbReference>
<dbReference type="InterPro" id="IPR036986">
    <property type="entry name" value="S4_RNA-bd_sf"/>
</dbReference>
<dbReference type="NCBIfam" id="NF003717">
    <property type="entry name" value="PRK05327.1"/>
    <property type="match status" value="1"/>
</dbReference>
<dbReference type="NCBIfam" id="TIGR01017">
    <property type="entry name" value="rpsD_bact"/>
    <property type="match status" value="1"/>
</dbReference>
<dbReference type="PANTHER" id="PTHR11831">
    <property type="entry name" value="30S 40S RIBOSOMAL PROTEIN"/>
    <property type="match status" value="1"/>
</dbReference>
<dbReference type="PANTHER" id="PTHR11831:SF4">
    <property type="entry name" value="SMALL RIBOSOMAL SUBUNIT PROTEIN US4M"/>
    <property type="match status" value="1"/>
</dbReference>
<dbReference type="Pfam" id="PF00163">
    <property type="entry name" value="Ribosomal_S4"/>
    <property type="match status" value="1"/>
</dbReference>
<dbReference type="Pfam" id="PF01479">
    <property type="entry name" value="S4"/>
    <property type="match status" value="1"/>
</dbReference>
<dbReference type="SMART" id="SM01390">
    <property type="entry name" value="Ribosomal_S4"/>
    <property type="match status" value="1"/>
</dbReference>
<dbReference type="SMART" id="SM00363">
    <property type="entry name" value="S4"/>
    <property type="match status" value="1"/>
</dbReference>
<dbReference type="SUPFAM" id="SSF55174">
    <property type="entry name" value="Alpha-L RNA-binding motif"/>
    <property type="match status" value="1"/>
</dbReference>
<dbReference type="PROSITE" id="PS50889">
    <property type="entry name" value="S4"/>
    <property type="match status" value="1"/>
</dbReference>
<reference key="1">
    <citation type="journal article" date="2009" name="Appl. Environ. Microbiol.">
        <title>Genome analysis of the meat starter culture bacterium Staphylococcus carnosus TM300.</title>
        <authorList>
            <person name="Rosenstein R."/>
            <person name="Nerz C."/>
            <person name="Biswas L."/>
            <person name="Resch A."/>
            <person name="Raddatz G."/>
            <person name="Schuster S.C."/>
            <person name="Goetz F."/>
        </authorList>
    </citation>
    <scope>NUCLEOTIDE SEQUENCE [LARGE SCALE GENOMIC DNA]</scope>
    <source>
        <strain>TM300</strain>
    </source>
</reference>
<comment type="function">
    <text evidence="1">One of the primary rRNA binding proteins, it binds directly to 16S rRNA where it nucleates assembly of the body of the 30S subunit.</text>
</comment>
<comment type="function">
    <text evidence="1">With S5 and S12 plays an important role in translational accuracy.</text>
</comment>
<comment type="subunit">
    <text evidence="1">Part of the 30S ribosomal subunit. Contacts protein S5. The interaction surface between S4 and S5 is involved in control of translational fidelity.</text>
</comment>
<comment type="similarity">
    <text evidence="1">Belongs to the universal ribosomal protein uS4 family.</text>
</comment>
<sequence>MARFRGSNWKKSRRLGISLSGTGKELEKRPYAPGQHGPNQRKKLSEYAIQLREKQKLRYLYGITERQFHNTFIEAGKQSGVHGENFMRLLARRLDAVVYALGLARTRRQARQLVGHGHIEVDGKRVNIPSYTLKPGQVVSVREKSQKLDIIQESVEINNFVPEYLDFDEEKLSGTFVRVPERSELPAEINEQLIVEYYSGK</sequence>
<evidence type="ECO:0000255" key="1">
    <source>
        <dbReference type="HAMAP-Rule" id="MF_01306"/>
    </source>
</evidence>
<evidence type="ECO:0000305" key="2"/>
<name>RS4_STACT</name>